<dbReference type="EMBL" id="X70476">
    <property type="protein sequence ID" value="CAA49900.1"/>
    <property type="molecule type" value="mRNA"/>
</dbReference>
<dbReference type="EMBL" id="AK302943">
    <property type="protein sequence ID" value="BAG64100.1"/>
    <property type="molecule type" value="mRNA"/>
</dbReference>
<dbReference type="EMBL" id="AC024933">
    <property type="status" value="NOT_ANNOTATED_CDS"/>
    <property type="molecule type" value="Genomic_DNA"/>
</dbReference>
<dbReference type="EMBL" id="CH471052">
    <property type="protein sequence ID" value="EAW79040.1"/>
    <property type="molecule type" value="Genomic_DNA"/>
</dbReference>
<dbReference type="EMBL" id="BC000326">
    <property type="protein sequence ID" value="AAH00326.1"/>
    <property type="molecule type" value="mRNA"/>
</dbReference>
<dbReference type="CCDS" id="CCDS3108.1">
    <molecule id="P35606-1"/>
</dbReference>
<dbReference type="CCDS" id="CCDS93395.1">
    <molecule id="P35606-2"/>
</dbReference>
<dbReference type="PIR" id="S35342">
    <property type="entry name" value="S35342"/>
</dbReference>
<dbReference type="RefSeq" id="NP_001397763.1">
    <molecule id="P35606-2"/>
    <property type="nucleotide sequence ID" value="NM_001410834.1"/>
</dbReference>
<dbReference type="RefSeq" id="NP_004757.1">
    <molecule id="P35606-1"/>
    <property type="nucleotide sequence ID" value="NM_004766.3"/>
</dbReference>
<dbReference type="RefSeq" id="XP_016863001.1">
    <property type="nucleotide sequence ID" value="XM_017007512.1"/>
</dbReference>
<dbReference type="PDB" id="8D30">
    <property type="method" value="X-ray"/>
    <property type="resolution" value="2.40 A"/>
    <property type="chains" value="A/B=1-597"/>
</dbReference>
<dbReference type="PDB" id="8D41">
    <property type="method" value="X-ray"/>
    <property type="resolution" value="2.00 A"/>
    <property type="chains" value="A/B=1-300"/>
</dbReference>
<dbReference type="PDBsum" id="8D30"/>
<dbReference type="PDBsum" id="8D41"/>
<dbReference type="SMR" id="P35606"/>
<dbReference type="BioGRID" id="114693">
    <property type="interactions" value="386"/>
</dbReference>
<dbReference type="ComplexPortal" id="CPX-7803">
    <property type="entry name" value="COPI vesicle coat complex, COPG1-COPZ1 variant"/>
</dbReference>
<dbReference type="ComplexPortal" id="CPX-7969">
    <property type="entry name" value="COPI vesicle coat complex, COPG2-COPZ1 variant"/>
</dbReference>
<dbReference type="ComplexPortal" id="CPX-7970">
    <property type="entry name" value="COPI vesicle coat complex, COPG1-COPZ2 variant"/>
</dbReference>
<dbReference type="CORUM" id="P35606"/>
<dbReference type="DIP" id="DIP-27603N"/>
<dbReference type="FunCoup" id="P35606">
    <property type="interactions" value="2657"/>
</dbReference>
<dbReference type="IntAct" id="P35606">
    <property type="interactions" value="221"/>
</dbReference>
<dbReference type="MINT" id="P35606"/>
<dbReference type="STRING" id="9606.ENSP00000329419"/>
<dbReference type="GlyCosmos" id="P35606">
    <property type="glycosylation" value="2 sites, 1 glycan"/>
</dbReference>
<dbReference type="GlyGen" id="P35606">
    <property type="glycosylation" value="4 sites, 1 O-linked glycan (2 sites)"/>
</dbReference>
<dbReference type="iPTMnet" id="P35606"/>
<dbReference type="MetOSite" id="P35606"/>
<dbReference type="PhosphoSitePlus" id="P35606"/>
<dbReference type="SwissPalm" id="P35606"/>
<dbReference type="BioMuta" id="COPB2"/>
<dbReference type="DMDM" id="544076"/>
<dbReference type="jPOST" id="P35606"/>
<dbReference type="MassIVE" id="P35606"/>
<dbReference type="PaxDb" id="9606-ENSP00000329419"/>
<dbReference type="PeptideAtlas" id="P35606"/>
<dbReference type="ProteomicsDB" id="55099">
    <molecule id="P35606-1"/>
</dbReference>
<dbReference type="ProteomicsDB" id="5603"/>
<dbReference type="Pumba" id="P35606"/>
<dbReference type="Antibodypedia" id="33460">
    <property type="antibodies" value="128 antibodies from 25 providers"/>
</dbReference>
<dbReference type="DNASU" id="9276"/>
<dbReference type="Ensembl" id="ENST00000333188.10">
    <molecule id="P35606-1"/>
    <property type="protein sequence ID" value="ENSP00000329419.4"/>
    <property type="gene ID" value="ENSG00000184432.11"/>
</dbReference>
<dbReference type="Ensembl" id="ENST00000507777.6">
    <molecule id="P35606-2"/>
    <property type="protein sequence ID" value="ENSP00000422295.1"/>
    <property type="gene ID" value="ENSG00000184432.11"/>
</dbReference>
<dbReference type="Ensembl" id="ENST00000512242.6">
    <molecule id="P35606-2"/>
    <property type="protein sequence ID" value="ENSP00000427185.2"/>
    <property type="gene ID" value="ENSG00000184432.11"/>
</dbReference>
<dbReference type="Ensembl" id="ENST00000514508.2">
    <molecule id="P35606-2"/>
    <property type="protein sequence ID" value="ENSP00000422469.2"/>
    <property type="gene ID" value="ENSG00000184432.11"/>
</dbReference>
<dbReference type="GeneID" id="9276"/>
<dbReference type="KEGG" id="hsa:9276"/>
<dbReference type="MANE-Select" id="ENST00000333188.10">
    <property type="protein sequence ID" value="ENSP00000329419.4"/>
    <property type="RefSeq nucleotide sequence ID" value="NM_004766.3"/>
    <property type="RefSeq protein sequence ID" value="NP_004757.1"/>
</dbReference>
<dbReference type="UCSC" id="uc003etf.5">
    <molecule id="P35606-1"/>
    <property type="organism name" value="human"/>
</dbReference>
<dbReference type="AGR" id="HGNC:2232"/>
<dbReference type="CTD" id="9276"/>
<dbReference type="DisGeNET" id="9276"/>
<dbReference type="GeneCards" id="COPB2"/>
<dbReference type="HGNC" id="HGNC:2232">
    <property type="gene designation" value="COPB2"/>
</dbReference>
<dbReference type="HPA" id="ENSG00000184432">
    <property type="expression patterns" value="Low tissue specificity"/>
</dbReference>
<dbReference type="MalaCards" id="COPB2"/>
<dbReference type="MIM" id="606990">
    <property type="type" value="gene"/>
</dbReference>
<dbReference type="MIM" id="617800">
    <property type="type" value="phenotype"/>
</dbReference>
<dbReference type="MIM" id="619884">
    <property type="type" value="phenotype"/>
</dbReference>
<dbReference type="neXtProt" id="NX_P35606"/>
<dbReference type="OpenTargets" id="ENSG00000184432"/>
<dbReference type="Orphanet" id="2512">
    <property type="disease" value="Autosomal recessive primary microcephaly"/>
</dbReference>
<dbReference type="PharmGKB" id="PA26748"/>
<dbReference type="VEuPathDB" id="HostDB:ENSG00000184432"/>
<dbReference type="eggNOG" id="KOG0276">
    <property type="taxonomic scope" value="Eukaryota"/>
</dbReference>
<dbReference type="GeneTree" id="ENSGT00900000141083"/>
<dbReference type="HOGENOM" id="CLU_005507_1_0_1"/>
<dbReference type="InParanoid" id="P35606"/>
<dbReference type="OrthoDB" id="2150324at2759"/>
<dbReference type="PAN-GO" id="P35606">
    <property type="GO annotations" value="5 GO annotations based on evolutionary models"/>
</dbReference>
<dbReference type="PhylomeDB" id="P35606"/>
<dbReference type="TreeFam" id="TF300688"/>
<dbReference type="PathwayCommons" id="P35606"/>
<dbReference type="Reactome" id="R-HSA-6807878">
    <property type="pathway name" value="COPI-mediated anterograde transport"/>
</dbReference>
<dbReference type="Reactome" id="R-HSA-6811434">
    <property type="pathway name" value="COPI-dependent Golgi-to-ER retrograde traffic"/>
</dbReference>
<dbReference type="SignaLink" id="P35606"/>
<dbReference type="BioGRID-ORCS" id="9276">
    <property type="hits" value="831 hits in 1160 CRISPR screens"/>
</dbReference>
<dbReference type="CD-CODE" id="DEE660B4">
    <property type="entry name" value="Stress granule"/>
</dbReference>
<dbReference type="ChiTaRS" id="COPB2">
    <property type="organism name" value="human"/>
</dbReference>
<dbReference type="GeneWiki" id="COPB2"/>
<dbReference type="GenomeRNAi" id="9276"/>
<dbReference type="Pharos" id="P35606">
    <property type="development level" value="Tbio"/>
</dbReference>
<dbReference type="PRO" id="PR:P35606"/>
<dbReference type="Proteomes" id="UP000005640">
    <property type="component" value="Chromosome 3"/>
</dbReference>
<dbReference type="RNAct" id="P35606">
    <property type="molecule type" value="protein"/>
</dbReference>
<dbReference type="Bgee" id="ENSG00000184432">
    <property type="expression patterns" value="Expressed in parotid gland and 210 other cell types or tissues"/>
</dbReference>
<dbReference type="ExpressionAtlas" id="P35606">
    <property type="expression patterns" value="baseline and differential"/>
</dbReference>
<dbReference type="GO" id="GO:0030126">
    <property type="term" value="C:COPI vesicle coat"/>
    <property type="evidence" value="ECO:0000314"/>
    <property type="project" value="UniProtKB"/>
</dbReference>
<dbReference type="GO" id="GO:0005829">
    <property type="term" value="C:cytosol"/>
    <property type="evidence" value="ECO:0000304"/>
    <property type="project" value="Reactome"/>
</dbReference>
<dbReference type="GO" id="GO:0005789">
    <property type="term" value="C:endoplasmic reticulum membrane"/>
    <property type="evidence" value="ECO:0000304"/>
    <property type="project" value="Reactome"/>
</dbReference>
<dbReference type="GO" id="GO:0000139">
    <property type="term" value="C:Golgi membrane"/>
    <property type="evidence" value="ECO:0000304"/>
    <property type="project" value="Reactome"/>
</dbReference>
<dbReference type="GO" id="GO:0030133">
    <property type="term" value="C:transport vesicle"/>
    <property type="evidence" value="ECO:0000304"/>
    <property type="project" value="Reactome"/>
</dbReference>
<dbReference type="GO" id="GO:0005198">
    <property type="term" value="F:structural molecule activity"/>
    <property type="evidence" value="ECO:0007669"/>
    <property type="project" value="InterPro"/>
</dbReference>
<dbReference type="GO" id="GO:0006888">
    <property type="term" value="P:endoplasmic reticulum to Golgi vesicle-mediated transport"/>
    <property type="evidence" value="ECO:0000318"/>
    <property type="project" value="GO_Central"/>
</dbReference>
<dbReference type="GO" id="GO:0006891">
    <property type="term" value="P:intra-Golgi vesicle-mediated transport"/>
    <property type="evidence" value="ECO:0000314"/>
    <property type="project" value="UniProtKB"/>
</dbReference>
<dbReference type="GO" id="GO:0006886">
    <property type="term" value="P:intracellular protein transport"/>
    <property type="evidence" value="ECO:0000318"/>
    <property type="project" value="GO_Central"/>
</dbReference>
<dbReference type="GO" id="GO:0006890">
    <property type="term" value="P:retrograde vesicle-mediated transport, Golgi to endoplasmic reticulum"/>
    <property type="evidence" value="ECO:0000315"/>
    <property type="project" value="UniProtKB"/>
</dbReference>
<dbReference type="CDD" id="cd22947">
    <property type="entry name" value="Coatomer_WDAD_beta-like"/>
    <property type="match status" value="1"/>
</dbReference>
<dbReference type="CDD" id="cd00200">
    <property type="entry name" value="WD40"/>
    <property type="match status" value="1"/>
</dbReference>
<dbReference type="FunFam" id="1.25.40.470:FF:000001">
    <property type="entry name" value="Coatomer subunit beta"/>
    <property type="match status" value="1"/>
</dbReference>
<dbReference type="FunFam" id="2.130.10.10:FF:000008">
    <property type="entry name" value="Coatomer subunit beta"/>
    <property type="match status" value="1"/>
</dbReference>
<dbReference type="Gene3D" id="1.25.40.470">
    <property type="match status" value="1"/>
</dbReference>
<dbReference type="Gene3D" id="2.130.10.10">
    <property type="entry name" value="YVTN repeat-like/Quinoprotein amine dehydrogenase"/>
    <property type="match status" value="1"/>
</dbReference>
<dbReference type="InterPro" id="IPR006692">
    <property type="entry name" value="Beta-prop_COPA/B_2nd"/>
</dbReference>
<dbReference type="InterPro" id="IPR050844">
    <property type="entry name" value="Coatomer_complex_subunit"/>
</dbReference>
<dbReference type="InterPro" id="IPR016453">
    <property type="entry name" value="COPB2"/>
</dbReference>
<dbReference type="InterPro" id="IPR020472">
    <property type="entry name" value="G-protein_beta_WD-40_rep"/>
</dbReference>
<dbReference type="InterPro" id="IPR056176">
    <property type="entry name" value="TPR_COPA_B"/>
</dbReference>
<dbReference type="InterPro" id="IPR015943">
    <property type="entry name" value="WD40/YVTN_repeat-like_dom_sf"/>
</dbReference>
<dbReference type="InterPro" id="IPR036322">
    <property type="entry name" value="WD40_repeat_dom_sf"/>
</dbReference>
<dbReference type="InterPro" id="IPR001680">
    <property type="entry name" value="WD40_rpt"/>
</dbReference>
<dbReference type="PANTHER" id="PTHR19876">
    <property type="entry name" value="COATOMER"/>
    <property type="match status" value="1"/>
</dbReference>
<dbReference type="PANTHER" id="PTHR19876:SF2">
    <property type="entry name" value="COATOMER SUBUNIT BETA"/>
    <property type="match status" value="1"/>
</dbReference>
<dbReference type="Pfam" id="PF04053">
    <property type="entry name" value="B-prop_COPA_B_2nd"/>
    <property type="match status" value="1"/>
</dbReference>
<dbReference type="Pfam" id="PF23953">
    <property type="entry name" value="TPR_COPA_B"/>
    <property type="match status" value="1"/>
</dbReference>
<dbReference type="Pfam" id="PF00400">
    <property type="entry name" value="WD40"/>
    <property type="match status" value="6"/>
</dbReference>
<dbReference type="PIRSF" id="PIRSF005567">
    <property type="entry name" value="Coatomer_beta'_subunit"/>
    <property type="match status" value="1"/>
</dbReference>
<dbReference type="PRINTS" id="PR00320">
    <property type="entry name" value="GPROTEINBRPT"/>
</dbReference>
<dbReference type="SMART" id="SM00320">
    <property type="entry name" value="WD40"/>
    <property type="match status" value="6"/>
</dbReference>
<dbReference type="SUPFAM" id="SSF50978">
    <property type="entry name" value="WD40 repeat-like"/>
    <property type="match status" value="2"/>
</dbReference>
<dbReference type="PROSITE" id="PS50082">
    <property type="entry name" value="WD_REPEATS_2"/>
    <property type="match status" value="5"/>
</dbReference>
<dbReference type="PROSITE" id="PS50294">
    <property type="entry name" value="WD_REPEATS_REGION"/>
    <property type="match status" value="1"/>
</dbReference>
<sequence length="906" mass="102487">MPLRLDIKRKLTARSDRVKSVDLHPTEPWMLASLYNGSVCVWNHETQTLVKTFEVCDLPVRAAKFVARKNWVVTGADDMQIRVFNYNTLERVHMFEAHSDYIRCIAVHPTQPFILTSSDDMLIKLWDWDKKWSCSQVFEGHTHYVMQIVINPKDNNQFASASLDRTIKVWQLGSSSPNFTLEGHEKGVNCIDYYSGGDKPYLISGADDRLVKIWDYQNKTCVQTLEGHAQNVSCASFHPELPIIITGSEDGTVRIWHSSTYRLESTLNYGMERVWCVASLRGSNNVALGYDEGSIIVKLGREEPAMSMDANGKIIWAKHSEVQQANLKAMGDAEIKDGERLPLAVKDMGSCEIYPQTIQHNPNGRFVVVCGDGEYIIYTAMALRNKSFGSAQEFAWAHDSSEYAIRESNSIVKIFKNFKEKKSFKPDFGAESIYGGFLLGVRSVNGLAFYDWDNTELIRRIEIQPKHIFWSDSGELVCIATEESFFILKYLSEKVLAAQETHEGVTEDGIEDAFEVLGEIQEIVKTGLWVGDCFIYTSSVNRLNYYVGGEIVTIAHLDRTMYLLGYIPKDNRLYLGDKELNIISYSLLVSVLEYQTAVMRRDFSMADKVLPTIPKEQRTRVAHFLEKQGFKQQALTVSTDPEHRFELALQLGELKIAYQLAVEAESEQKWKQLAELAISKCQFGLAQECLHHAQDYGGLLLLATASGNANMVNKLAEGAERDGKNNVAFMSYFLQGKVDACLELLIRTGRLPEAAFLARTYLPSQVSRVVKLWRENLSKVNQKAAESLADPTEYENLFPGLKEAFVVEEWVKETHADLWPAKQYPLVTPNEERNVMEEGKDFQPSRSTAQQELDGKPASPTPVIVASHTANKEEKSLLELEVDLDNLELEDIDTTDINLDEDILDD</sequence>
<reference key="1">
    <citation type="journal article" date="1993" name="EMBO J.">
        <title>A 102 kDa subunit of a Golgi-associated particle has homology to beta subunits of trimeric G proteins.</title>
        <authorList>
            <person name="Harrison-Lavoie K.J."/>
            <person name="Lewis V.A."/>
            <person name="Hynes G.M."/>
            <person name="Collison K.S."/>
            <person name="Nutland E."/>
            <person name="Willison K.R."/>
        </authorList>
    </citation>
    <scope>NUCLEOTIDE SEQUENCE [MRNA] (ISOFORM 1)</scope>
</reference>
<reference key="2">
    <citation type="journal article" date="2004" name="Nat. Genet.">
        <title>Complete sequencing and characterization of 21,243 full-length human cDNAs.</title>
        <authorList>
            <person name="Ota T."/>
            <person name="Suzuki Y."/>
            <person name="Nishikawa T."/>
            <person name="Otsuki T."/>
            <person name="Sugiyama T."/>
            <person name="Irie R."/>
            <person name="Wakamatsu A."/>
            <person name="Hayashi K."/>
            <person name="Sato H."/>
            <person name="Nagai K."/>
            <person name="Kimura K."/>
            <person name="Makita H."/>
            <person name="Sekine M."/>
            <person name="Obayashi M."/>
            <person name="Nishi T."/>
            <person name="Shibahara T."/>
            <person name="Tanaka T."/>
            <person name="Ishii S."/>
            <person name="Yamamoto J."/>
            <person name="Saito K."/>
            <person name="Kawai Y."/>
            <person name="Isono Y."/>
            <person name="Nakamura Y."/>
            <person name="Nagahari K."/>
            <person name="Murakami K."/>
            <person name="Yasuda T."/>
            <person name="Iwayanagi T."/>
            <person name="Wagatsuma M."/>
            <person name="Shiratori A."/>
            <person name="Sudo H."/>
            <person name="Hosoiri T."/>
            <person name="Kaku Y."/>
            <person name="Kodaira H."/>
            <person name="Kondo H."/>
            <person name="Sugawara M."/>
            <person name="Takahashi M."/>
            <person name="Kanda K."/>
            <person name="Yokoi T."/>
            <person name="Furuya T."/>
            <person name="Kikkawa E."/>
            <person name="Omura Y."/>
            <person name="Abe K."/>
            <person name="Kamihara K."/>
            <person name="Katsuta N."/>
            <person name="Sato K."/>
            <person name="Tanikawa M."/>
            <person name="Yamazaki M."/>
            <person name="Ninomiya K."/>
            <person name="Ishibashi T."/>
            <person name="Yamashita H."/>
            <person name="Murakawa K."/>
            <person name="Fujimori K."/>
            <person name="Tanai H."/>
            <person name="Kimata M."/>
            <person name="Watanabe M."/>
            <person name="Hiraoka S."/>
            <person name="Chiba Y."/>
            <person name="Ishida S."/>
            <person name="Ono Y."/>
            <person name="Takiguchi S."/>
            <person name="Watanabe S."/>
            <person name="Yosida M."/>
            <person name="Hotuta T."/>
            <person name="Kusano J."/>
            <person name="Kanehori K."/>
            <person name="Takahashi-Fujii A."/>
            <person name="Hara H."/>
            <person name="Tanase T.-O."/>
            <person name="Nomura Y."/>
            <person name="Togiya S."/>
            <person name="Komai F."/>
            <person name="Hara R."/>
            <person name="Takeuchi K."/>
            <person name="Arita M."/>
            <person name="Imose N."/>
            <person name="Musashino K."/>
            <person name="Yuuki H."/>
            <person name="Oshima A."/>
            <person name="Sasaki N."/>
            <person name="Aotsuka S."/>
            <person name="Yoshikawa Y."/>
            <person name="Matsunawa H."/>
            <person name="Ichihara T."/>
            <person name="Shiohata N."/>
            <person name="Sano S."/>
            <person name="Moriya S."/>
            <person name="Momiyama H."/>
            <person name="Satoh N."/>
            <person name="Takami S."/>
            <person name="Terashima Y."/>
            <person name="Suzuki O."/>
            <person name="Nakagawa S."/>
            <person name="Senoh A."/>
            <person name="Mizoguchi H."/>
            <person name="Goto Y."/>
            <person name="Shimizu F."/>
            <person name="Wakebe H."/>
            <person name="Hishigaki H."/>
            <person name="Watanabe T."/>
            <person name="Sugiyama A."/>
            <person name="Takemoto M."/>
            <person name="Kawakami B."/>
            <person name="Yamazaki M."/>
            <person name="Watanabe K."/>
            <person name="Kumagai A."/>
            <person name="Itakura S."/>
            <person name="Fukuzumi Y."/>
            <person name="Fujimori Y."/>
            <person name="Komiyama M."/>
            <person name="Tashiro H."/>
            <person name="Tanigami A."/>
            <person name="Fujiwara T."/>
            <person name="Ono T."/>
            <person name="Yamada K."/>
            <person name="Fujii Y."/>
            <person name="Ozaki K."/>
            <person name="Hirao M."/>
            <person name="Ohmori Y."/>
            <person name="Kawabata A."/>
            <person name="Hikiji T."/>
            <person name="Kobatake N."/>
            <person name="Inagaki H."/>
            <person name="Ikema Y."/>
            <person name="Okamoto S."/>
            <person name="Okitani R."/>
            <person name="Kawakami T."/>
            <person name="Noguchi S."/>
            <person name="Itoh T."/>
            <person name="Shigeta K."/>
            <person name="Senba T."/>
            <person name="Matsumura K."/>
            <person name="Nakajima Y."/>
            <person name="Mizuno T."/>
            <person name="Morinaga M."/>
            <person name="Sasaki M."/>
            <person name="Togashi T."/>
            <person name="Oyama M."/>
            <person name="Hata H."/>
            <person name="Watanabe M."/>
            <person name="Komatsu T."/>
            <person name="Mizushima-Sugano J."/>
            <person name="Satoh T."/>
            <person name="Shirai Y."/>
            <person name="Takahashi Y."/>
            <person name="Nakagawa K."/>
            <person name="Okumura K."/>
            <person name="Nagase T."/>
            <person name="Nomura N."/>
            <person name="Kikuchi H."/>
            <person name="Masuho Y."/>
            <person name="Yamashita R."/>
            <person name="Nakai K."/>
            <person name="Yada T."/>
            <person name="Nakamura Y."/>
            <person name="Ohara O."/>
            <person name="Isogai T."/>
            <person name="Sugano S."/>
        </authorList>
    </citation>
    <scope>NUCLEOTIDE SEQUENCE [LARGE SCALE MRNA] (ISOFORM 2)</scope>
    <source>
        <tissue>Testis</tissue>
    </source>
</reference>
<reference key="3">
    <citation type="journal article" date="2006" name="Nature">
        <title>The DNA sequence, annotation and analysis of human chromosome 3.</title>
        <authorList>
            <person name="Muzny D.M."/>
            <person name="Scherer S.E."/>
            <person name="Kaul R."/>
            <person name="Wang J."/>
            <person name="Yu J."/>
            <person name="Sudbrak R."/>
            <person name="Buhay C.J."/>
            <person name="Chen R."/>
            <person name="Cree A."/>
            <person name="Ding Y."/>
            <person name="Dugan-Rocha S."/>
            <person name="Gill R."/>
            <person name="Gunaratne P."/>
            <person name="Harris R.A."/>
            <person name="Hawes A.C."/>
            <person name="Hernandez J."/>
            <person name="Hodgson A.V."/>
            <person name="Hume J."/>
            <person name="Jackson A."/>
            <person name="Khan Z.M."/>
            <person name="Kovar-Smith C."/>
            <person name="Lewis L.R."/>
            <person name="Lozado R.J."/>
            <person name="Metzker M.L."/>
            <person name="Milosavljevic A."/>
            <person name="Miner G.R."/>
            <person name="Morgan M.B."/>
            <person name="Nazareth L.V."/>
            <person name="Scott G."/>
            <person name="Sodergren E."/>
            <person name="Song X.-Z."/>
            <person name="Steffen D."/>
            <person name="Wei S."/>
            <person name="Wheeler D.A."/>
            <person name="Wright M.W."/>
            <person name="Worley K.C."/>
            <person name="Yuan Y."/>
            <person name="Zhang Z."/>
            <person name="Adams C.Q."/>
            <person name="Ansari-Lari M.A."/>
            <person name="Ayele M."/>
            <person name="Brown M.J."/>
            <person name="Chen G."/>
            <person name="Chen Z."/>
            <person name="Clendenning J."/>
            <person name="Clerc-Blankenburg K.P."/>
            <person name="Chen R."/>
            <person name="Chen Z."/>
            <person name="Davis C."/>
            <person name="Delgado O."/>
            <person name="Dinh H.H."/>
            <person name="Dong W."/>
            <person name="Draper H."/>
            <person name="Ernst S."/>
            <person name="Fu G."/>
            <person name="Gonzalez-Garay M.L."/>
            <person name="Garcia D.K."/>
            <person name="Gillett W."/>
            <person name="Gu J."/>
            <person name="Hao B."/>
            <person name="Haugen E."/>
            <person name="Havlak P."/>
            <person name="He X."/>
            <person name="Hennig S."/>
            <person name="Hu S."/>
            <person name="Huang W."/>
            <person name="Jackson L.R."/>
            <person name="Jacob L.S."/>
            <person name="Kelly S.H."/>
            <person name="Kube M."/>
            <person name="Levy R."/>
            <person name="Li Z."/>
            <person name="Liu B."/>
            <person name="Liu J."/>
            <person name="Liu W."/>
            <person name="Lu J."/>
            <person name="Maheshwari M."/>
            <person name="Nguyen B.-V."/>
            <person name="Okwuonu G.O."/>
            <person name="Palmeiri A."/>
            <person name="Pasternak S."/>
            <person name="Perez L.M."/>
            <person name="Phelps K.A."/>
            <person name="Plopper F.J."/>
            <person name="Qiang B."/>
            <person name="Raymond C."/>
            <person name="Rodriguez R."/>
            <person name="Saenphimmachak C."/>
            <person name="Santibanez J."/>
            <person name="Shen H."/>
            <person name="Shen Y."/>
            <person name="Subramanian S."/>
            <person name="Tabor P.E."/>
            <person name="Verduzco D."/>
            <person name="Waldron L."/>
            <person name="Wang J."/>
            <person name="Wang J."/>
            <person name="Wang Q."/>
            <person name="Williams G.A."/>
            <person name="Wong G.K.-S."/>
            <person name="Yao Z."/>
            <person name="Zhang J."/>
            <person name="Zhang X."/>
            <person name="Zhao G."/>
            <person name="Zhou J."/>
            <person name="Zhou Y."/>
            <person name="Nelson D."/>
            <person name="Lehrach H."/>
            <person name="Reinhardt R."/>
            <person name="Naylor S.L."/>
            <person name="Yang H."/>
            <person name="Olson M."/>
            <person name="Weinstock G."/>
            <person name="Gibbs R.A."/>
        </authorList>
    </citation>
    <scope>NUCLEOTIDE SEQUENCE [LARGE SCALE GENOMIC DNA]</scope>
</reference>
<reference key="4">
    <citation type="submission" date="2005-09" db="EMBL/GenBank/DDBJ databases">
        <authorList>
            <person name="Mural R.J."/>
            <person name="Istrail S."/>
            <person name="Sutton G."/>
            <person name="Florea L."/>
            <person name="Halpern A.L."/>
            <person name="Mobarry C.M."/>
            <person name="Lippert R."/>
            <person name="Walenz B."/>
            <person name="Shatkay H."/>
            <person name="Dew I."/>
            <person name="Miller J.R."/>
            <person name="Flanigan M.J."/>
            <person name="Edwards N.J."/>
            <person name="Bolanos R."/>
            <person name="Fasulo D."/>
            <person name="Halldorsson B.V."/>
            <person name="Hannenhalli S."/>
            <person name="Turner R."/>
            <person name="Yooseph S."/>
            <person name="Lu F."/>
            <person name="Nusskern D.R."/>
            <person name="Shue B.C."/>
            <person name="Zheng X.H."/>
            <person name="Zhong F."/>
            <person name="Delcher A.L."/>
            <person name="Huson D.H."/>
            <person name="Kravitz S.A."/>
            <person name="Mouchard L."/>
            <person name="Reinert K."/>
            <person name="Remington K.A."/>
            <person name="Clark A.G."/>
            <person name="Waterman M.S."/>
            <person name="Eichler E.E."/>
            <person name="Adams M.D."/>
            <person name="Hunkapiller M.W."/>
            <person name="Myers E.W."/>
            <person name="Venter J.C."/>
        </authorList>
    </citation>
    <scope>NUCLEOTIDE SEQUENCE [LARGE SCALE GENOMIC DNA]</scope>
</reference>
<reference key="5">
    <citation type="journal article" date="2004" name="Genome Res.">
        <title>The status, quality, and expansion of the NIH full-length cDNA project: the Mammalian Gene Collection (MGC).</title>
        <authorList>
            <consortium name="The MGC Project Team"/>
        </authorList>
    </citation>
    <scope>NUCLEOTIDE SEQUENCE [LARGE SCALE MRNA] (ISOFORM 1)</scope>
    <source>
        <tissue>Lung</tissue>
    </source>
</reference>
<reference key="6">
    <citation type="journal article" date="2003" name="Nat. Biotechnol.">
        <title>Exploring proteomes and analyzing protein processing by mass spectrometric identification of sorted N-terminal peptides.</title>
        <authorList>
            <person name="Gevaert K."/>
            <person name="Goethals M."/>
            <person name="Martens L."/>
            <person name="Van Damme J."/>
            <person name="Staes A."/>
            <person name="Thomas G.R."/>
            <person name="Vandekerckhove J."/>
        </authorList>
    </citation>
    <scope>PROTEIN SEQUENCE OF 2-9</scope>
    <source>
        <tissue>Platelet</tissue>
    </source>
</reference>
<reference key="7">
    <citation type="journal article" date="2006" name="Cell">
        <title>Global, in vivo, and site-specific phosphorylation dynamics in signaling networks.</title>
        <authorList>
            <person name="Olsen J.V."/>
            <person name="Blagoev B."/>
            <person name="Gnad F."/>
            <person name="Macek B."/>
            <person name="Kumar C."/>
            <person name="Mortensen P."/>
            <person name="Mann M."/>
        </authorList>
    </citation>
    <scope>IDENTIFICATION BY MASS SPECTROMETRY [LARGE SCALE ANALYSIS]</scope>
    <source>
        <tissue>Cervix carcinoma</tissue>
    </source>
</reference>
<reference key="8">
    <citation type="journal article" date="2008" name="Mol. Cell">
        <title>Kinase-selective enrichment enables quantitative phosphoproteomics of the kinome across the cell cycle.</title>
        <authorList>
            <person name="Daub H."/>
            <person name="Olsen J.V."/>
            <person name="Bairlein M."/>
            <person name="Gnad F."/>
            <person name="Oppermann F.S."/>
            <person name="Korner R."/>
            <person name="Greff Z."/>
            <person name="Keri G."/>
            <person name="Stemmann O."/>
            <person name="Mann M."/>
        </authorList>
    </citation>
    <scope>IDENTIFICATION BY MASS SPECTROMETRY [LARGE SCALE ANALYSIS]</scope>
    <source>
        <tissue>Cervix carcinoma</tissue>
    </source>
</reference>
<reference key="9">
    <citation type="journal article" date="2008" name="Proc. Natl. Acad. Sci. U.S.A.">
        <title>A quantitative atlas of mitotic phosphorylation.</title>
        <authorList>
            <person name="Dephoure N."/>
            <person name="Zhou C."/>
            <person name="Villen J."/>
            <person name="Beausoleil S.A."/>
            <person name="Bakalarski C.E."/>
            <person name="Elledge S.J."/>
            <person name="Gygi S.P."/>
        </authorList>
    </citation>
    <scope>PHOSPHORYLATION [LARGE SCALE ANALYSIS] AT SER-859</scope>
    <scope>IDENTIFICATION BY MASS SPECTROMETRY [LARGE SCALE ANALYSIS]</scope>
    <source>
        <tissue>Cervix carcinoma</tissue>
    </source>
</reference>
<reference key="10">
    <citation type="journal article" date="2009" name="Anal. Chem.">
        <title>Lys-N and trypsin cover complementary parts of the phosphoproteome in a refined SCX-based approach.</title>
        <authorList>
            <person name="Gauci S."/>
            <person name="Helbig A.O."/>
            <person name="Slijper M."/>
            <person name="Krijgsveld J."/>
            <person name="Heck A.J."/>
            <person name="Mohammed S."/>
        </authorList>
    </citation>
    <scope>IDENTIFICATION BY MASS SPECTROMETRY [LARGE SCALE ANALYSIS]</scope>
</reference>
<reference key="11">
    <citation type="journal article" date="2009" name="Sci. Signal.">
        <title>Quantitative phosphoproteomic analysis of T cell receptor signaling reveals system-wide modulation of protein-protein interactions.</title>
        <authorList>
            <person name="Mayya V."/>
            <person name="Lundgren D.H."/>
            <person name="Hwang S.-I."/>
            <person name="Rezaul K."/>
            <person name="Wu L."/>
            <person name="Eng J.K."/>
            <person name="Rodionov V."/>
            <person name="Han D.K."/>
        </authorList>
    </citation>
    <scope>PHOSPHORYLATION [LARGE SCALE ANALYSIS] AT SER-859</scope>
    <scope>IDENTIFICATION BY MASS SPECTROMETRY [LARGE SCALE ANALYSIS]</scope>
    <source>
        <tissue>Leukemic T-cell</tissue>
    </source>
</reference>
<reference key="12">
    <citation type="journal article" date="2009" name="Science">
        <title>Lysine acetylation targets protein complexes and co-regulates major cellular functions.</title>
        <authorList>
            <person name="Choudhary C."/>
            <person name="Kumar C."/>
            <person name="Gnad F."/>
            <person name="Nielsen M.L."/>
            <person name="Rehman M."/>
            <person name="Walther T.C."/>
            <person name="Olsen J.V."/>
            <person name="Mann M."/>
        </authorList>
    </citation>
    <scope>ACETYLATION [LARGE SCALE ANALYSIS] AT LYS-627</scope>
    <scope>IDENTIFICATION BY MASS SPECTROMETRY [LARGE SCALE ANALYSIS]</scope>
</reference>
<reference key="13">
    <citation type="journal article" date="2010" name="Sci. Signal.">
        <title>Quantitative phosphoproteomics reveals widespread full phosphorylation site occupancy during mitosis.</title>
        <authorList>
            <person name="Olsen J.V."/>
            <person name="Vermeulen M."/>
            <person name="Santamaria A."/>
            <person name="Kumar C."/>
            <person name="Miller M.L."/>
            <person name="Jensen L.J."/>
            <person name="Gnad F."/>
            <person name="Cox J."/>
            <person name="Jensen T.S."/>
            <person name="Nigg E.A."/>
            <person name="Brunak S."/>
            <person name="Mann M."/>
        </authorList>
    </citation>
    <scope>PHOSPHORYLATION [LARGE SCALE ANALYSIS] AT SER-859</scope>
    <scope>IDENTIFICATION BY MASS SPECTROMETRY [LARGE SCALE ANALYSIS]</scope>
    <source>
        <tissue>Cervix carcinoma</tissue>
    </source>
</reference>
<reference key="14">
    <citation type="journal article" date="2011" name="BMC Syst. Biol.">
        <title>Initial characterization of the human central proteome.</title>
        <authorList>
            <person name="Burkard T.R."/>
            <person name="Planyavsky M."/>
            <person name="Kaupe I."/>
            <person name="Breitwieser F.P."/>
            <person name="Buerckstuemmer T."/>
            <person name="Bennett K.L."/>
            <person name="Superti-Furga G."/>
            <person name="Colinge J."/>
        </authorList>
    </citation>
    <scope>IDENTIFICATION BY MASS SPECTROMETRY [LARGE SCALE ANALYSIS]</scope>
</reference>
<reference key="15">
    <citation type="journal article" date="2011" name="Sci. Signal.">
        <title>System-wide temporal characterization of the proteome and phosphoproteome of human embryonic stem cell differentiation.</title>
        <authorList>
            <person name="Rigbolt K.T."/>
            <person name="Prokhorova T.A."/>
            <person name="Akimov V."/>
            <person name="Henningsen J."/>
            <person name="Johansen P.T."/>
            <person name="Kratchmarova I."/>
            <person name="Kassem M."/>
            <person name="Mann M."/>
            <person name="Olsen J.V."/>
            <person name="Blagoev B."/>
        </authorList>
    </citation>
    <scope>PHOSPHORYLATION [LARGE SCALE ANALYSIS] AT SER-859</scope>
    <scope>IDENTIFICATION BY MASS SPECTROMETRY [LARGE SCALE ANALYSIS]</scope>
</reference>
<reference key="16">
    <citation type="journal article" date="2013" name="J. Proteome Res.">
        <title>Toward a comprehensive characterization of a human cancer cell phosphoproteome.</title>
        <authorList>
            <person name="Zhou H."/>
            <person name="Di Palma S."/>
            <person name="Preisinger C."/>
            <person name="Peng M."/>
            <person name="Polat A.N."/>
            <person name="Heck A.J."/>
            <person name="Mohammed S."/>
        </authorList>
    </citation>
    <scope>PHOSPHORYLATION [LARGE SCALE ANALYSIS] AT SER-859</scope>
    <scope>IDENTIFICATION BY MASS SPECTROMETRY [LARGE SCALE ANALYSIS]</scope>
    <source>
        <tissue>Cervix carcinoma</tissue>
        <tissue>Erythroleukemia</tissue>
    </source>
</reference>
<reference key="17">
    <citation type="journal article" date="2014" name="J. Proteomics">
        <title>An enzyme assisted RP-RPLC approach for in-depth analysis of human liver phosphoproteome.</title>
        <authorList>
            <person name="Bian Y."/>
            <person name="Song C."/>
            <person name="Cheng K."/>
            <person name="Dong M."/>
            <person name="Wang F."/>
            <person name="Huang J."/>
            <person name="Sun D."/>
            <person name="Wang L."/>
            <person name="Ye M."/>
            <person name="Zou H."/>
        </authorList>
    </citation>
    <scope>PHOSPHORYLATION [LARGE SCALE ANALYSIS] AT SER-859 AND THR-861</scope>
    <scope>IDENTIFICATION BY MASS SPECTROMETRY [LARGE SCALE ANALYSIS]</scope>
    <source>
        <tissue>Liver</tissue>
    </source>
</reference>
<reference key="18">
    <citation type="journal article" date="2014" name="Nat. Genet.">
        <title>JAGN1 deficiency causes aberrant myeloid cell homeostasis and congenital neutropenia.</title>
        <authorList>
            <person name="Boztug K."/>
            <person name="Jaervinen P.M."/>
            <person name="Salzer E."/>
            <person name="Racek T."/>
            <person name="Moench S."/>
            <person name="Garncarz W."/>
            <person name="Gertz E.M."/>
            <person name="Schaeffer A.A."/>
            <person name="Antonopoulos A."/>
            <person name="Haslam S.M."/>
            <person name="Schieck L."/>
            <person name="Puchalka J."/>
            <person name="Diestelhorst J."/>
            <person name="Appaswamy G."/>
            <person name="Lescoeur B."/>
            <person name="Giambruno R."/>
            <person name="Bigenzahn J.W."/>
            <person name="Elling U."/>
            <person name="Pfeifer D."/>
            <person name="Conde C.D."/>
            <person name="Albert M.H."/>
            <person name="Welte K."/>
            <person name="Brandes G."/>
            <person name="Sherkat R."/>
            <person name="van der Werff Ten Bosch J."/>
            <person name="Rezaei N."/>
            <person name="Etzioni A."/>
            <person name="Bellanne-Chantelot C."/>
            <person name="Superti-Furga G."/>
            <person name="Penninger J.M."/>
            <person name="Bennett K.L."/>
            <person name="von Blume J."/>
            <person name="Dell A."/>
            <person name="Donadieu J."/>
            <person name="Klein C."/>
        </authorList>
    </citation>
    <scope>INTERACTION WITH JAGN1</scope>
</reference>
<reference key="19">
    <citation type="journal article" date="2017" name="Hum. Mol. Genet.">
        <title>Copb2 is essential for embryogenesis and hypomorphic mutations cause human microcephaly.</title>
        <authorList>
            <person name="DiStasio A."/>
            <person name="Driver A."/>
            <person name="Sund K."/>
            <person name="Donlin M."/>
            <person name="Muraleedharan R.M."/>
            <person name="Pooya S."/>
            <person name="Kline-Fath B."/>
            <person name="Kaufman K.M."/>
            <person name="Prows C.A."/>
            <person name="Schorry E."/>
            <person name="Dasgupta B."/>
            <person name="Stottmann R.W."/>
        </authorList>
    </citation>
    <scope>INVOLVEMENT IN MCPH19</scope>
    <scope>VARIANT MCPH19 CYS-254</scope>
</reference>
<reference key="20">
    <citation type="journal article" date="2021" name="Am. J. Hum. Genet.">
        <title>COPB2 loss of function causes a coatopathy with osteoporosis and developmental delay.</title>
        <authorList>
            <consortium name="Undiagnosed Diseases Network"/>
            <person name="Marom R."/>
            <person name="Burrage L.C."/>
            <person name="Venditti R."/>
            <person name="Clement A."/>
            <person name="Blanco-Sanchez B."/>
            <person name="Jain M."/>
            <person name="Scott D.A."/>
            <person name="Rosenfeld J.A."/>
            <person name="Sutton V.R."/>
            <person name="Shinawi M."/>
            <person name="Mirzaa G."/>
            <person name="DeVile C."/>
            <person name="Roberts R."/>
            <person name="Calder A.D."/>
            <person name="Allgrove J."/>
            <person name="Grafe I."/>
            <person name="Lanza D.G."/>
            <person name="Li X."/>
            <person name="Joeng K.S."/>
            <person name="Lee Y.C."/>
            <person name="Song I.W."/>
            <person name="Sliepka J.M."/>
            <person name="Batkovskyte D."/>
            <person name="Washington M."/>
            <person name="Dawson B.C."/>
            <person name="Jin Z."/>
            <person name="Jiang M.M."/>
            <person name="Chen S."/>
            <person name="Chen Y."/>
            <person name="Tran A.A."/>
            <person name="Emrick L.T."/>
            <person name="Murdock D.R."/>
            <person name="Hanchard N.A."/>
            <person name="Zapata G.E."/>
            <person name="Mehta N.R."/>
            <person name="Weis M.A."/>
            <person name="Scott A.A."/>
            <person name="Tremp B.A."/>
            <person name="Phillips J.B."/>
            <person name="Wegner J."/>
            <person name="Taylor-Miller T."/>
            <person name="Gibbs R.A."/>
            <person name="Muzny D.M."/>
            <person name="Jhangiani S.N."/>
            <person name="Hicks J."/>
            <person name="Stottmann R.W."/>
            <person name="Dickinson M.E."/>
            <person name="Seavitt J.R."/>
            <person name="Heaney J.D."/>
            <person name="Eyre D.R."/>
            <person name="Westerfield M."/>
            <person name="De Matteis M.A."/>
            <person name="Lee B."/>
        </authorList>
    </citation>
    <scope>INVOLVEMENT IN OPDD</scope>
    <scope>FUNCTION</scope>
</reference>
<proteinExistence type="evidence at protein level"/>
<accession>P35606</accession>
<accession>B4DZI8</accession>
<feature type="initiator methionine" description="Removed" evidence="4">
    <location>
        <position position="1"/>
    </location>
</feature>
<feature type="chain" id="PRO_0000050912" description="Coatomer subunit beta'">
    <location>
        <begin position="2"/>
        <end position="906"/>
    </location>
</feature>
<feature type="repeat" description="WD 1">
    <location>
        <begin position="13"/>
        <end position="52"/>
    </location>
</feature>
<feature type="repeat" description="WD 2">
    <location>
        <begin position="55"/>
        <end position="94"/>
    </location>
</feature>
<feature type="repeat" description="WD 3">
    <location>
        <begin position="97"/>
        <end position="136"/>
    </location>
</feature>
<feature type="repeat" description="WD 4">
    <location>
        <begin position="140"/>
        <end position="180"/>
    </location>
</feature>
<feature type="repeat" description="WD 5">
    <location>
        <begin position="183"/>
        <end position="224"/>
    </location>
</feature>
<feature type="repeat" description="WD 6">
    <location>
        <begin position="227"/>
        <end position="266"/>
    </location>
</feature>
<feature type="region of interest" description="Disordered" evidence="3">
    <location>
        <begin position="837"/>
        <end position="870"/>
    </location>
</feature>
<feature type="coiled-coil region" evidence="2">
    <location>
        <begin position="866"/>
        <end position="891"/>
    </location>
</feature>
<feature type="modified residue" description="N6-acetyllysine" evidence="11">
    <location>
        <position position="627"/>
    </location>
</feature>
<feature type="modified residue" description="Phosphoserine" evidence="10 12 13 14 15 16">
    <location>
        <position position="859"/>
    </location>
</feature>
<feature type="modified residue" description="Phosphothreonine" evidence="16">
    <location>
        <position position="861"/>
    </location>
</feature>
<feature type="splice variant" id="VSP_056165" description="In isoform 2." evidence="8">
    <location>
        <begin position="1"/>
        <end position="29"/>
    </location>
</feature>
<feature type="sequence variant" id="VAR_080601" description="In MCPH19; uncertain significance; dbSNP:rs1229568621." evidence="6">
    <original>R</original>
    <variation>C</variation>
    <location>
        <position position="254"/>
    </location>
</feature>
<feature type="strand" evidence="18">
    <location>
        <begin position="7"/>
        <end position="14"/>
    </location>
</feature>
<feature type="strand" evidence="18">
    <location>
        <begin position="18"/>
        <end position="23"/>
    </location>
</feature>
<feature type="strand" evidence="18">
    <location>
        <begin position="25"/>
        <end position="34"/>
    </location>
</feature>
<feature type="strand" evidence="18">
    <location>
        <begin position="37"/>
        <end position="43"/>
    </location>
</feature>
<feature type="turn" evidence="18">
    <location>
        <begin position="44"/>
        <end position="47"/>
    </location>
</feature>
<feature type="strand" evidence="18">
    <location>
        <begin position="48"/>
        <end position="54"/>
    </location>
</feature>
<feature type="strand" evidence="18">
    <location>
        <begin position="62"/>
        <end position="66"/>
    </location>
</feature>
<feature type="helix" evidence="18">
    <location>
        <begin position="67"/>
        <end position="69"/>
    </location>
</feature>
<feature type="strand" evidence="18">
    <location>
        <begin position="71"/>
        <end position="75"/>
    </location>
</feature>
<feature type="strand" evidence="18">
    <location>
        <begin position="79"/>
        <end position="85"/>
    </location>
</feature>
<feature type="turn" evidence="18">
    <location>
        <begin position="86"/>
        <end position="88"/>
    </location>
</feature>
<feature type="strand" evidence="18">
    <location>
        <begin position="91"/>
        <end position="96"/>
    </location>
</feature>
<feature type="strand" evidence="18">
    <location>
        <begin position="102"/>
        <end position="107"/>
    </location>
</feature>
<feature type="strand" evidence="18">
    <location>
        <begin position="109"/>
        <end position="118"/>
    </location>
</feature>
<feature type="strand" evidence="18">
    <location>
        <begin position="123"/>
        <end position="127"/>
    </location>
</feature>
<feature type="turn" evidence="18">
    <location>
        <begin position="128"/>
        <end position="132"/>
    </location>
</feature>
<feature type="strand" evidence="18">
    <location>
        <begin position="134"/>
        <end position="138"/>
    </location>
</feature>
<feature type="strand" evidence="18">
    <location>
        <begin position="145"/>
        <end position="151"/>
    </location>
</feature>
<feature type="strand" evidence="18">
    <location>
        <begin position="154"/>
        <end position="162"/>
    </location>
</feature>
<feature type="strand" evidence="18">
    <location>
        <begin position="167"/>
        <end position="171"/>
    </location>
</feature>
<feature type="strand" evidence="18">
    <location>
        <begin position="178"/>
        <end position="181"/>
    </location>
</feature>
<feature type="strand" evidence="18">
    <location>
        <begin position="188"/>
        <end position="193"/>
    </location>
</feature>
<feature type="strand" evidence="18">
    <location>
        <begin position="201"/>
        <end position="206"/>
    </location>
</feature>
<feature type="strand" evidence="18">
    <location>
        <begin position="211"/>
        <end position="215"/>
    </location>
</feature>
<feature type="turn" evidence="18">
    <location>
        <begin position="216"/>
        <end position="219"/>
    </location>
</feature>
<feature type="strand" evidence="18">
    <location>
        <begin position="220"/>
        <end position="225"/>
    </location>
</feature>
<feature type="strand" evidence="18">
    <location>
        <begin position="232"/>
        <end position="237"/>
    </location>
</feature>
<feature type="strand" evidence="18">
    <location>
        <begin position="239"/>
        <end position="248"/>
    </location>
</feature>
<feature type="strand" evidence="18">
    <location>
        <begin position="251"/>
        <end position="257"/>
    </location>
</feature>
<feature type="turn" evidence="18">
    <location>
        <begin position="258"/>
        <end position="260"/>
    </location>
</feature>
<feature type="strand" evidence="18">
    <location>
        <begin position="263"/>
        <end position="268"/>
    </location>
</feature>
<feature type="strand" evidence="18">
    <location>
        <begin position="270"/>
        <end position="272"/>
    </location>
</feature>
<feature type="strand" evidence="18">
    <location>
        <begin position="274"/>
        <end position="279"/>
    </location>
</feature>
<feature type="strand" evidence="18">
    <location>
        <begin position="285"/>
        <end position="290"/>
    </location>
</feature>
<feature type="strand" evidence="18">
    <location>
        <begin position="293"/>
        <end position="299"/>
    </location>
</feature>
<feature type="strand" evidence="17">
    <location>
        <begin position="306"/>
        <end position="308"/>
    </location>
</feature>
<feature type="strand" evidence="17">
    <location>
        <begin position="314"/>
        <end position="318"/>
    </location>
</feature>
<feature type="strand" evidence="17">
    <location>
        <begin position="321"/>
        <end position="327"/>
    </location>
</feature>
<feature type="turn" evidence="17">
    <location>
        <begin position="332"/>
        <end position="334"/>
    </location>
</feature>
<feature type="strand" evidence="17">
    <location>
        <begin position="343"/>
        <end position="350"/>
    </location>
</feature>
<feature type="strand" evidence="17">
    <location>
        <begin position="356"/>
        <end position="360"/>
    </location>
</feature>
<feature type="strand" evidence="17">
    <location>
        <begin position="364"/>
        <end position="371"/>
    </location>
</feature>
<feature type="strand" evidence="17">
    <location>
        <begin position="374"/>
        <end position="379"/>
    </location>
</feature>
<feature type="turn" evidence="17">
    <location>
        <begin position="380"/>
        <end position="383"/>
    </location>
</feature>
<feature type="strand" evidence="17">
    <location>
        <begin position="384"/>
        <end position="390"/>
    </location>
</feature>
<feature type="strand" evidence="17">
    <location>
        <begin position="392"/>
        <end position="407"/>
    </location>
</feature>
<feature type="turn" evidence="17">
    <location>
        <begin position="408"/>
        <end position="410"/>
    </location>
</feature>
<feature type="strand" evidence="17">
    <location>
        <begin position="411"/>
        <end position="416"/>
    </location>
</feature>
<feature type="strand" evidence="17">
    <location>
        <begin position="419"/>
        <end position="424"/>
    </location>
</feature>
<feature type="strand" evidence="17">
    <location>
        <begin position="431"/>
        <end position="434"/>
    </location>
</feature>
<feature type="strand" evidence="17">
    <location>
        <begin position="436"/>
        <end position="442"/>
    </location>
</feature>
<feature type="strand" evidence="17">
    <location>
        <begin position="447"/>
        <end position="450"/>
    </location>
</feature>
<feature type="turn" evidence="17">
    <location>
        <begin position="452"/>
        <end position="454"/>
    </location>
</feature>
<feature type="strand" evidence="17">
    <location>
        <begin position="457"/>
        <end position="461"/>
    </location>
</feature>
<feature type="strand" evidence="17">
    <location>
        <begin position="466"/>
        <end position="470"/>
    </location>
</feature>
<feature type="strand" evidence="17">
    <location>
        <begin position="474"/>
        <end position="480"/>
    </location>
</feature>
<feature type="strand" evidence="17">
    <location>
        <begin position="485"/>
        <end position="490"/>
    </location>
</feature>
<feature type="helix" evidence="17">
    <location>
        <begin position="492"/>
        <end position="501"/>
    </location>
</feature>
<feature type="strand" evidence="17">
    <location>
        <begin position="513"/>
        <end position="522"/>
    </location>
</feature>
<feature type="strand" evidence="17">
    <location>
        <begin position="524"/>
        <end position="530"/>
    </location>
</feature>
<feature type="strand" evidence="17">
    <location>
        <begin position="533"/>
        <end position="538"/>
    </location>
</feature>
<feature type="strand" evidence="17">
    <location>
        <begin position="541"/>
        <end position="547"/>
    </location>
</feature>
<feature type="strand" evidence="17">
    <location>
        <begin position="550"/>
        <end position="556"/>
    </location>
</feature>
<feature type="strand" evidence="17">
    <location>
        <begin position="562"/>
        <end position="567"/>
    </location>
</feature>
<feature type="turn" evidence="17">
    <location>
        <begin position="568"/>
        <end position="571"/>
    </location>
</feature>
<feature type="strand" evidence="17">
    <location>
        <begin position="572"/>
        <end position="576"/>
    </location>
</feature>
<feature type="strand" evidence="17">
    <location>
        <begin position="582"/>
        <end position="586"/>
    </location>
</feature>
<gene>
    <name type="primary">COPB2</name>
</gene>
<name>COPB2_HUMAN</name>
<organism>
    <name type="scientific">Homo sapiens</name>
    <name type="common">Human</name>
    <dbReference type="NCBI Taxonomy" id="9606"/>
    <lineage>
        <taxon>Eukaryota</taxon>
        <taxon>Metazoa</taxon>
        <taxon>Chordata</taxon>
        <taxon>Craniata</taxon>
        <taxon>Vertebrata</taxon>
        <taxon>Euteleostomi</taxon>
        <taxon>Mammalia</taxon>
        <taxon>Eutheria</taxon>
        <taxon>Euarchontoglires</taxon>
        <taxon>Primates</taxon>
        <taxon>Haplorrhini</taxon>
        <taxon>Catarrhini</taxon>
        <taxon>Hominidae</taxon>
        <taxon>Homo</taxon>
    </lineage>
</organism>
<keyword id="KW-0002">3D-structure</keyword>
<keyword id="KW-0007">Acetylation</keyword>
<keyword id="KW-0025">Alternative splicing</keyword>
<keyword id="KW-0175">Coiled coil</keyword>
<keyword id="KW-0963">Cytoplasm</keyword>
<keyword id="KW-0968">Cytoplasmic vesicle</keyword>
<keyword id="KW-0903">Direct protein sequencing</keyword>
<keyword id="KW-0931">ER-Golgi transport</keyword>
<keyword id="KW-0333">Golgi apparatus</keyword>
<keyword id="KW-0472">Membrane</keyword>
<keyword id="KW-1285">Osteoporosis</keyword>
<keyword id="KW-0597">Phosphoprotein</keyword>
<keyword id="KW-0905">Primary microcephaly</keyword>
<keyword id="KW-0653">Protein transport</keyword>
<keyword id="KW-1267">Proteomics identification</keyword>
<keyword id="KW-1185">Reference proteome</keyword>
<keyword id="KW-0677">Repeat</keyword>
<keyword id="KW-0813">Transport</keyword>
<keyword id="KW-0853">WD repeat</keyword>
<comment type="function">
    <text evidence="7">The coatomer is a cytosolic protein complex that binds to dilysine motifs and reversibly associates with Golgi non-clathrin-coated vesicles, which further mediate biosynthetic protein transport from the ER, via the Golgi up to the trans Golgi network. Coatomer complex is required for budding from Golgi membranes, and is essential for the retrograde Golgi-to-ER transport of dilysine-tagged proteins. In mammals, the coatomer can only be recruited by membranes associated to ADP-ribosylation factors (ARFs), which are small GTP-binding proteins; the complex also influences the Golgi structural integrity, as well as the processing, activity, and endocytic recycling of LDL receptors.</text>
</comment>
<comment type="function">
    <text evidence="1">This coatomer complex protein, essential for Golgi budding and vesicular trafficking, is a selective binding protein (RACK) for protein kinase C, epsilon type. It binds to Golgi membranes in a GTP-dependent manner (By similarity).</text>
</comment>
<comment type="subunit">
    <text evidence="1 5">Oligomeric complex that consists of at least the alpha, beta, beta', gamma, delta, epsilon and zeta subunits. Probably interacts with PEX11A. Interacts with SCYL1 (By similarity). Interacts with JAGN1 (PubMed:25129144).</text>
</comment>
<comment type="interaction">
    <interactant intactId="EBI-1056534">
        <id>P35606</id>
    </interactant>
    <interactant intactId="EBI-300010">
        <id>P19838</id>
        <label>NFKB1</label>
    </interactant>
    <organismsDiffer>false</organismsDiffer>
    <experiments>5</experiments>
</comment>
<comment type="interaction">
    <interactant intactId="EBI-1056534">
        <id>P35606</id>
    </interactant>
    <interactant intactId="EBI-25474821">
        <id>P0DTC2</id>
        <label>S</label>
    </interactant>
    <organismsDiffer>true</organismsDiffer>
    <experiments>3</experiments>
</comment>
<comment type="subcellular location">
    <subcellularLocation>
        <location evidence="1">Cytoplasm</location>
        <location evidence="1">Cytosol</location>
    </subcellularLocation>
    <subcellularLocation>
        <location evidence="1">Golgi apparatus membrane</location>
        <topology evidence="1">Peripheral membrane protein</topology>
        <orientation evidence="1">Cytoplasmic side</orientation>
    </subcellularLocation>
    <subcellularLocation>
        <location evidence="1">Cytoplasmic vesicle</location>
        <location evidence="1">COPI-coated vesicle membrane</location>
        <topology evidence="1">Peripheral membrane protein</topology>
        <orientation evidence="1">Cytoplasmic side</orientation>
    </subcellularLocation>
    <text evidence="1">The coatomer is cytoplasmic or polymerized on the cytoplasmic side of the Golgi, as well as on the vesicles/buds originating from it. Shows only a slight preference for the cis-Golgi apparatus, compared with the trans-Golgi.</text>
</comment>
<comment type="alternative products">
    <event type="alternative splicing"/>
    <isoform>
        <id>P35606-1</id>
        <name>1</name>
        <sequence type="displayed"/>
    </isoform>
    <isoform>
        <id>P35606-2</id>
        <name>2</name>
        <sequence type="described" ref="VSP_056165"/>
    </isoform>
</comment>
<comment type="disease" evidence="6">
    <disease id="DI-05157">
        <name>Microcephaly 19, primary, autosomal recessive</name>
        <acronym>MCPH19</acronym>
        <description>A form of microcephaly, a disease defined as a head circumference more than 3 standard deviations below the age, sex and ethnically matched mean. Brain weight is markedly reduced and the cerebral cortex is disproportionately small. MCPH19 affected individuals manifest severe developmental delay, failure to thrive, cortical blindness, and spasticity. Brain imaging show a simplified gyral pattern, thin corpus callosum, slight ventricular dilation, and delayed myelination.</description>
        <dbReference type="MIM" id="617800"/>
    </disease>
    <text>The disease may be caused by variants affecting the gene represented in this entry.</text>
</comment>
<comment type="disease" evidence="7">
    <disease id="DI-06432">
        <name>Osteoporosis, childhood- or juvenile-onset, with developmental delay</name>
        <acronym>OPDD</acronym>
        <description>An autosomal dominant disorder characterized by decreased bone mass and deterioration of bone microarchitecture, fragile bones, recurrent fractures following minor trauma, and developmental delay of variable severity.</description>
        <dbReference type="MIM" id="619884"/>
    </disease>
    <text>The disease is caused by variants affecting the gene represented in this entry.</text>
</comment>
<comment type="similarity">
    <text evidence="9">Belongs to the WD repeat COPB2 family.</text>
</comment>
<protein>
    <recommendedName>
        <fullName>Coatomer subunit beta'</fullName>
    </recommendedName>
    <alternativeName>
        <fullName>Beta'-coat protein</fullName>
        <shortName>Beta'-COP</shortName>
    </alternativeName>
    <alternativeName>
        <fullName>p102</fullName>
    </alternativeName>
</protein>
<evidence type="ECO:0000250" key="1"/>
<evidence type="ECO:0000255" key="2"/>
<evidence type="ECO:0000256" key="3">
    <source>
        <dbReference type="SAM" id="MobiDB-lite"/>
    </source>
</evidence>
<evidence type="ECO:0000269" key="4">
    <source>
    </source>
</evidence>
<evidence type="ECO:0000269" key="5">
    <source>
    </source>
</evidence>
<evidence type="ECO:0000269" key="6">
    <source>
    </source>
</evidence>
<evidence type="ECO:0000269" key="7">
    <source>
    </source>
</evidence>
<evidence type="ECO:0000303" key="8">
    <source>
    </source>
</evidence>
<evidence type="ECO:0000305" key="9"/>
<evidence type="ECO:0007744" key="10">
    <source>
    </source>
</evidence>
<evidence type="ECO:0007744" key="11">
    <source>
    </source>
</evidence>
<evidence type="ECO:0007744" key="12">
    <source>
    </source>
</evidence>
<evidence type="ECO:0007744" key="13">
    <source>
    </source>
</evidence>
<evidence type="ECO:0007744" key="14">
    <source>
    </source>
</evidence>
<evidence type="ECO:0007744" key="15">
    <source>
    </source>
</evidence>
<evidence type="ECO:0007744" key="16">
    <source>
    </source>
</evidence>
<evidence type="ECO:0007829" key="17">
    <source>
        <dbReference type="PDB" id="8D30"/>
    </source>
</evidence>
<evidence type="ECO:0007829" key="18">
    <source>
        <dbReference type="PDB" id="8D41"/>
    </source>
</evidence>